<organism>
    <name type="scientific">Escherichia coli (strain ATCC 8739 / DSM 1576 / NBRC 3972 / NCIMB 8545 / WDCM 00012 / Crooks)</name>
    <dbReference type="NCBI Taxonomy" id="481805"/>
    <lineage>
        <taxon>Bacteria</taxon>
        <taxon>Pseudomonadati</taxon>
        <taxon>Pseudomonadota</taxon>
        <taxon>Gammaproteobacteria</taxon>
        <taxon>Enterobacterales</taxon>
        <taxon>Enterobacteriaceae</taxon>
        <taxon>Escherichia</taxon>
    </lineage>
</organism>
<protein>
    <recommendedName>
        <fullName evidence="1">UPF0306 protein YhbP</fullName>
    </recommendedName>
</protein>
<comment type="similarity">
    <text evidence="1">Belongs to the UPF0306 family.</text>
</comment>
<feature type="chain" id="PRO_1000083531" description="UPF0306 protein YhbP">
    <location>
        <begin position="1"/>
        <end position="147"/>
    </location>
</feature>
<evidence type="ECO:0000255" key="1">
    <source>
        <dbReference type="HAMAP-Rule" id="MF_00764"/>
    </source>
</evidence>
<gene>
    <name evidence="1" type="primary">yhbP</name>
    <name type="ordered locus">EcolC_0544</name>
</gene>
<name>YHBP_ECOLC</name>
<reference key="1">
    <citation type="submission" date="2008-02" db="EMBL/GenBank/DDBJ databases">
        <title>Complete sequence of Escherichia coli C str. ATCC 8739.</title>
        <authorList>
            <person name="Copeland A."/>
            <person name="Lucas S."/>
            <person name="Lapidus A."/>
            <person name="Glavina del Rio T."/>
            <person name="Dalin E."/>
            <person name="Tice H."/>
            <person name="Bruce D."/>
            <person name="Goodwin L."/>
            <person name="Pitluck S."/>
            <person name="Kiss H."/>
            <person name="Brettin T."/>
            <person name="Detter J.C."/>
            <person name="Han C."/>
            <person name="Kuske C.R."/>
            <person name="Schmutz J."/>
            <person name="Larimer F."/>
            <person name="Land M."/>
            <person name="Hauser L."/>
            <person name="Kyrpides N."/>
            <person name="Mikhailova N."/>
            <person name="Ingram L."/>
            <person name="Richardson P."/>
        </authorList>
    </citation>
    <scope>NUCLEOTIDE SEQUENCE [LARGE SCALE GENOMIC DNA]</scope>
    <source>
        <strain>ATCC 8739 / DSM 1576 / NBRC 3972 / NCIMB 8545 / WDCM 00012 / Crooks</strain>
    </source>
</reference>
<accession>B1IQW7</accession>
<proteinExistence type="inferred from homology"/>
<sequence>METLIAISRWLAKQHVVTWCVQQEGELWCANAFYLFDAQKVAFYILTEEKTRHAQMSGPQAAVAGTVNGQPKTVALIRGVQFKGEIRRLEGEESDLARKAYNRRFPVARMLSAPVWEIRLDEIKFTDNTLGFGKKMIWLRDSGTEQA</sequence>
<dbReference type="EMBL" id="CP000946">
    <property type="protein sequence ID" value="ACA76221.1"/>
    <property type="molecule type" value="Genomic_DNA"/>
</dbReference>
<dbReference type="RefSeq" id="WP_000449030.1">
    <property type="nucleotide sequence ID" value="NZ_MTFT01000027.1"/>
</dbReference>
<dbReference type="SMR" id="B1IQW7"/>
<dbReference type="KEGG" id="ecl:EcolC_0544"/>
<dbReference type="HOGENOM" id="CLU_105087_3_0_6"/>
<dbReference type="FunFam" id="2.30.110.10:FF:000003">
    <property type="entry name" value="UPF0306 protein YhbP"/>
    <property type="match status" value="1"/>
</dbReference>
<dbReference type="Gene3D" id="2.30.110.10">
    <property type="entry name" value="Electron Transport, Fmn-binding Protein, Chain A"/>
    <property type="match status" value="1"/>
</dbReference>
<dbReference type="HAMAP" id="MF_00764">
    <property type="entry name" value="UPF0306"/>
    <property type="match status" value="1"/>
</dbReference>
<dbReference type="InterPro" id="IPR012349">
    <property type="entry name" value="Split_barrel_FMN-bd"/>
</dbReference>
<dbReference type="InterPro" id="IPR011194">
    <property type="entry name" value="UPF0306"/>
</dbReference>
<dbReference type="NCBIfam" id="NF002900">
    <property type="entry name" value="PRK03467.1"/>
    <property type="match status" value="1"/>
</dbReference>
<dbReference type="PIRSF" id="PIRSF009554">
    <property type="entry name" value="UCP009554"/>
    <property type="match status" value="1"/>
</dbReference>
<dbReference type="SUPFAM" id="SSF50475">
    <property type="entry name" value="FMN-binding split barrel"/>
    <property type="match status" value="1"/>
</dbReference>